<accession>Q58794</accession>
<proteinExistence type="inferred from homology"/>
<keyword id="KW-0067">ATP-binding</keyword>
<keyword id="KW-0547">Nucleotide-binding</keyword>
<keyword id="KW-1185">Reference proteome</keyword>
<gene>
    <name type="ordered locus">MJ1399</name>
</gene>
<sequence length="197" mass="22630">MLLIGITGMPGAGKSSAYEIAKKYNLPIVSMGDVVRYETKKRGLELTPENVGNTAIKLREEFGNEAIAVACLKYIEENLKDKEIVIVEGIRSLYEVNYFRKHKPLVLIAIHSSPLTRFERLKKRGREDDSANWEVFVERDLRELGFSIGHAIALADFVVVNEKSFEDCLNQLDNILQEILNNLEKYKKYNFIYETLR</sequence>
<comment type="similarity">
    <text evidence="1">Belongs to the UPF0200 family.</text>
</comment>
<reference key="1">
    <citation type="journal article" date="1996" name="Science">
        <title>Complete genome sequence of the methanogenic archaeon, Methanococcus jannaschii.</title>
        <authorList>
            <person name="Bult C.J."/>
            <person name="White O."/>
            <person name="Olsen G.J."/>
            <person name="Zhou L."/>
            <person name="Fleischmann R.D."/>
            <person name="Sutton G.G."/>
            <person name="Blake J.A."/>
            <person name="FitzGerald L.M."/>
            <person name="Clayton R.A."/>
            <person name="Gocayne J.D."/>
            <person name="Kerlavage A.R."/>
            <person name="Dougherty B.A."/>
            <person name="Tomb J.-F."/>
            <person name="Adams M.D."/>
            <person name="Reich C.I."/>
            <person name="Overbeek R."/>
            <person name="Kirkness E.F."/>
            <person name="Weinstock K.G."/>
            <person name="Merrick J.M."/>
            <person name="Glodek A."/>
            <person name="Scott J.L."/>
            <person name="Geoghagen N.S.M."/>
            <person name="Weidman J.F."/>
            <person name="Fuhrmann J.L."/>
            <person name="Nguyen D."/>
            <person name="Utterback T.R."/>
            <person name="Kelley J.M."/>
            <person name="Peterson J.D."/>
            <person name="Sadow P.W."/>
            <person name="Hanna M.C."/>
            <person name="Cotton M.D."/>
            <person name="Roberts K.M."/>
            <person name="Hurst M.A."/>
            <person name="Kaine B.P."/>
            <person name="Borodovsky M."/>
            <person name="Klenk H.-P."/>
            <person name="Fraser C.M."/>
            <person name="Smith H.O."/>
            <person name="Woese C.R."/>
            <person name="Venter J.C."/>
        </authorList>
    </citation>
    <scope>NUCLEOTIDE SEQUENCE [LARGE SCALE GENOMIC DNA]</scope>
    <source>
        <strain>ATCC 43067 / DSM 2661 / JAL-1 / JCM 10045 / NBRC 100440</strain>
    </source>
</reference>
<name>Y1399_METJA</name>
<feature type="chain" id="PRO_0000094525" description="UPF0200 protein MJ1399">
    <location>
        <begin position="1"/>
        <end position="197"/>
    </location>
</feature>
<feature type="binding site" evidence="1">
    <location>
        <begin position="8"/>
        <end position="15"/>
    </location>
    <ligand>
        <name>ATP</name>
        <dbReference type="ChEBI" id="CHEBI:30616"/>
    </ligand>
</feature>
<organism>
    <name type="scientific">Methanocaldococcus jannaschii (strain ATCC 43067 / DSM 2661 / JAL-1 / JCM 10045 / NBRC 100440)</name>
    <name type="common">Methanococcus jannaschii</name>
    <dbReference type="NCBI Taxonomy" id="243232"/>
    <lineage>
        <taxon>Archaea</taxon>
        <taxon>Methanobacteriati</taxon>
        <taxon>Methanobacteriota</taxon>
        <taxon>Methanomada group</taxon>
        <taxon>Methanococci</taxon>
        <taxon>Methanococcales</taxon>
        <taxon>Methanocaldococcaceae</taxon>
        <taxon>Methanocaldococcus</taxon>
    </lineage>
</organism>
<protein>
    <recommendedName>
        <fullName evidence="1">UPF0200 protein MJ1399</fullName>
    </recommendedName>
</protein>
<dbReference type="EMBL" id="L77117">
    <property type="protein sequence ID" value="AAB99408.1"/>
    <property type="molecule type" value="Genomic_DNA"/>
</dbReference>
<dbReference type="PIR" id="F64474">
    <property type="entry name" value="F64474"/>
</dbReference>
<dbReference type="RefSeq" id="WP_010870916.1">
    <property type="nucleotide sequence ID" value="NC_000909.1"/>
</dbReference>
<dbReference type="SMR" id="Q58794"/>
<dbReference type="STRING" id="243232.MJ_1399"/>
<dbReference type="PaxDb" id="243232-MJ_1399"/>
<dbReference type="EnsemblBacteria" id="AAB99408">
    <property type="protein sequence ID" value="AAB99408"/>
    <property type="gene ID" value="MJ_1399"/>
</dbReference>
<dbReference type="GeneID" id="1452302"/>
<dbReference type="KEGG" id="mja:MJ_1399"/>
<dbReference type="eggNOG" id="arCOG01045">
    <property type="taxonomic scope" value="Archaea"/>
</dbReference>
<dbReference type="HOGENOM" id="CLU_096329_1_0_2"/>
<dbReference type="InParanoid" id="Q58794"/>
<dbReference type="OrthoDB" id="85381at2157"/>
<dbReference type="PhylomeDB" id="Q58794"/>
<dbReference type="Proteomes" id="UP000000805">
    <property type="component" value="Chromosome"/>
</dbReference>
<dbReference type="GO" id="GO:0005524">
    <property type="term" value="F:ATP binding"/>
    <property type="evidence" value="ECO:0007669"/>
    <property type="project" value="UniProtKB-UniRule"/>
</dbReference>
<dbReference type="Gene3D" id="3.40.50.300">
    <property type="entry name" value="P-loop containing nucleotide triphosphate hydrolases"/>
    <property type="match status" value="1"/>
</dbReference>
<dbReference type="HAMAP" id="MF_01111">
    <property type="entry name" value="UPF0200"/>
    <property type="match status" value="1"/>
</dbReference>
<dbReference type="InterPro" id="IPR022970">
    <property type="entry name" value="NTP_hydrolase-rel"/>
</dbReference>
<dbReference type="InterPro" id="IPR027417">
    <property type="entry name" value="P-loop_NTPase"/>
</dbReference>
<dbReference type="PANTHER" id="PTHR41930:SF1">
    <property type="entry name" value="DEPHOSPHO-COA KINASE"/>
    <property type="match status" value="1"/>
</dbReference>
<dbReference type="PANTHER" id="PTHR41930">
    <property type="entry name" value="UPF0200 PROTEIN MJ1399"/>
    <property type="match status" value="1"/>
</dbReference>
<dbReference type="Pfam" id="PF13207">
    <property type="entry name" value="AAA_17"/>
    <property type="match status" value="1"/>
</dbReference>
<dbReference type="SUPFAM" id="SSF52540">
    <property type="entry name" value="P-loop containing nucleoside triphosphate hydrolases"/>
    <property type="match status" value="1"/>
</dbReference>
<evidence type="ECO:0000255" key="1">
    <source>
        <dbReference type="HAMAP-Rule" id="MF_01111"/>
    </source>
</evidence>